<feature type="chain" id="PRO_1000061530" description="Putative pre-16S rRNA nuclease">
    <location>
        <begin position="1"/>
        <end position="143"/>
    </location>
</feature>
<proteinExistence type="inferred from homology"/>
<keyword id="KW-0963">Cytoplasm</keyword>
<keyword id="KW-0378">Hydrolase</keyword>
<keyword id="KW-0540">Nuclease</keyword>
<keyword id="KW-0690">Ribosome biogenesis</keyword>
<evidence type="ECO:0000255" key="1">
    <source>
        <dbReference type="HAMAP-Rule" id="MF_00651"/>
    </source>
</evidence>
<comment type="function">
    <text evidence="1">Could be a nuclease involved in processing of the 5'-end of pre-16S rRNA.</text>
</comment>
<comment type="subcellular location">
    <subcellularLocation>
        <location evidence="1">Cytoplasm</location>
    </subcellularLocation>
</comment>
<comment type="similarity">
    <text evidence="1">Belongs to the YqgF nuclease family.</text>
</comment>
<accession>A2RHM2</accession>
<organism>
    <name type="scientific">Lactococcus lactis subsp. cremoris (strain MG1363)</name>
    <dbReference type="NCBI Taxonomy" id="416870"/>
    <lineage>
        <taxon>Bacteria</taxon>
        <taxon>Bacillati</taxon>
        <taxon>Bacillota</taxon>
        <taxon>Bacilli</taxon>
        <taxon>Lactobacillales</taxon>
        <taxon>Streptococcaceae</taxon>
        <taxon>Lactococcus</taxon>
        <taxon>Lactococcus cremoris subsp. cremoris</taxon>
    </lineage>
</organism>
<sequence length="143" mass="15652">MFARILGLDVGTKTVGVSVSDLLGMTAQPVETIKIDSEAGELGFDRLAVLIKEYKPEKVVLGLPKHMNGDEGIRAEASRDYGTKLANKFGLEVAYQDERLTTAQAEKVLIDGGVRRKDRKKSIDKLAAVLILQNYLDAHALKL</sequence>
<dbReference type="EC" id="3.1.-.-" evidence="1"/>
<dbReference type="EMBL" id="AM406671">
    <property type="protein sequence ID" value="CAL96758.1"/>
    <property type="molecule type" value="Genomic_DNA"/>
</dbReference>
<dbReference type="RefSeq" id="WP_011834244.1">
    <property type="nucleotide sequence ID" value="NC_009004.1"/>
</dbReference>
<dbReference type="SMR" id="A2RHM2"/>
<dbReference type="STRING" id="416870.llmg_0151"/>
<dbReference type="KEGG" id="llm:llmg_0151"/>
<dbReference type="eggNOG" id="COG0816">
    <property type="taxonomic scope" value="Bacteria"/>
</dbReference>
<dbReference type="HOGENOM" id="CLU_098240_2_0_9"/>
<dbReference type="OrthoDB" id="9796140at2"/>
<dbReference type="PhylomeDB" id="A2RHM2"/>
<dbReference type="Proteomes" id="UP000000364">
    <property type="component" value="Chromosome"/>
</dbReference>
<dbReference type="GO" id="GO:0005829">
    <property type="term" value="C:cytosol"/>
    <property type="evidence" value="ECO:0007669"/>
    <property type="project" value="TreeGrafter"/>
</dbReference>
<dbReference type="GO" id="GO:0004518">
    <property type="term" value="F:nuclease activity"/>
    <property type="evidence" value="ECO:0007669"/>
    <property type="project" value="UniProtKB-KW"/>
</dbReference>
<dbReference type="GO" id="GO:0000967">
    <property type="term" value="P:rRNA 5'-end processing"/>
    <property type="evidence" value="ECO:0007669"/>
    <property type="project" value="UniProtKB-UniRule"/>
</dbReference>
<dbReference type="CDD" id="cd16964">
    <property type="entry name" value="YqgF"/>
    <property type="match status" value="1"/>
</dbReference>
<dbReference type="Gene3D" id="3.30.420.140">
    <property type="entry name" value="YqgF/RNase H-like domain"/>
    <property type="match status" value="1"/>
</dbReference>
<dbReference type="HAMAP" id="MF_00651">
    <property type="entry name" value="Nuclease_YqgF"/>
    <property type="match status" value="1"/>
</dbReference>
<dbReference type="InterPro" id="IPR012337">
    <property type="entry name" value="RNaseH-like_sf"/>
</dbReference>
<dbReference type="InterPro" id="IPR005227">
    <property type="entry name" value="YqgF"/>
</dbReference>
<dbReference type="InterPro" id="IPR006641">
    <property type="entry name" value="YqgF/RNaseH-like_dom"/>
</dbReference>
<dbReference type="InterPro" id="IPR037027">
    <property type="entry name" value="YqgF/RNaseH-like_dom_sf"/>
</dbReference>
<dbReference type="NCBIfam" id="TIGR00250">
    <property type="entry name" value="RNAse_H_YqgF"/>
    <property type="match status" value="1"/>
</dbReference>
<dbReference type="PANTHER" id="PTHR33317">
    <property type="entry name" value="POLYNUCLEOTIDYL TRANSFERASE, RIBONUCLEASE H-LIKE SUPERFAMILY PROTEIN"/>
    <property type="match status" value="1"/>
</dbReference>
<dbReference type="PANTHER" id="PTHR33317:SF4">
    <property type="entry name" value="POLYNUCLEOTIDYL TRANSFERASE, RIBONUCLEASE H-LIKE SUPERFAMILY PROTEIN"/>
    <property type="match status" value="1"/>
</dbReference>
<dbReference type="Pfam" id="PF03652">
    <property type="entry name" value="RuvX"/>
    <property type="match status" value="1"/>
</dbReference>
<dbReference type="SMART" id="SM00732">
    <property type="entry name" value="YqgFc"/>
    <property type="match status" value="1"/>
</dbReference>
<dbReference type="SUPFAM" id="SSF53098">
    <property type="entry name" value="Ribonuclease H-like"/>
    <property type="match status" value="1"/>
</dbReference>
<protein>
    <recommendedName>
        <fullName evidence="1">Putative pre-16S rRNA nuclease</fullName>
        <ecNumber evidence="1">3.1.-.-</ecNumber>
    </recommendedName>
</protein>
<reference key="1">
    <citation type="journal article" date="2007" name="J. Bacteriol.">
        <title>The complete genome sequence of the lactic acid bacterial paradigm Lactococcus lactis subsp. cremoris MG1363.</title>
        <authorList>
            <person name="Wegmann U."/>
            <person name="O'Connell-Motherway M."/>
            <person name="Zomer A."/>
            <person name="Buist G."/>
            <person name="Shearman C."/>
            <person name="Canchaya C."/>
            <person name="Ventura M."/>
            <person name="Goesmann A."/>
            <person name="Gasson M.J."/>
            <person name="Kuipers O.P."/>
            <person name="van Sinderen D."/>
            <person name="Kok J."/>
        </authorList>
    </citation>
    <scope>NUCLEOTIDE SEQUENCE [LARGE SCALE GENOMIC DNA]</scope>
    <source>
        <strain>MG1363</strain>
    </source>
</reference>
<gene>
    <name type="ordered locus">llmg_0151</name>
</gene>
<name>YQGF_LACLM</name>